<name>INLPB_MYCTU</name>
<keyword id="KW-0276">Fatty acid metabolism</keyword>
<keyword id="KW-0443">Lipid metabolism</keyword>
<keyword id="KW-0596">Phosphopantetheine</keyword>
<keyword id="KW-0597">Phosphoprotein</keyword>
<keyword id="KW-1185">Reference proteome</keyword>
<gene>
    <name type="ordered locus">Rv0100</name>
    <name type="ORF">MTCY251.19</name>
</gene>
<dbReference type="EMBL" id="AL123456">
    <property type="protein sequence ID" value="CCP42825.1"/>
    <property type="molecule type" value="Genomic_DNA"/>
</dbReference>
<dbReference type="PIR" id="D70751">
    <property type="entry name" value="D70751"/>
</dbReference>
<dbReference type="RefSeq" id="NP_214614.1">
    <property type="nucleotide sequence ID" value="NC_000962.3"/>
</dbReference>
<dbReference type="RefSeq" id="WP_003400793.1">
    <property type="nucleotide sequence ID" value="NZ_NVQJ01000053.1"/>
</dbReference>
<dbReference type="SMR" id="P9WM65"/>
<dbReference type="STRING" id="83332.Rv0100"/>
<dbReference type="PaxDb" id="83332-Rv0100"/>
<dbReference type="GeneID" id="886931"/>
<dbReference type="KEGG" id="mtu:Rv0100"/>
<dbReference type="KEGG" id="mtv:RVBD_0100"/>
<dbReference type="PATRIC" id="fig|83332.111.peg.114"/>
<dbReference type="TubercuList" id="Rv0100"/>
<dbReference type="eggNOG" id="ENOG5031TJP">
    <property type="taxonomic scope" value="Bacteria"/>
</dbReference>
<dbReference type="InParanoid" id="P9WM65"/>
<dbReference type="OrthoDB" id="4630103at2"/>
<dbReference type="UniPathway" id="UPA00199"/>
<dbReference type="Proteomes" id="UP000001584">
    <property type="component" value="Chromosome"/>
</dbReference>
<dbReference type="GO" id="GO:0006631">
    <property type="term" value="P:fatty acid metabolic process"/>
    <property type="evidence" value="ECO:0007669"/>
    <property type="project" value="UniProtKB-UniPathway"/>
</dbReference>
<dbReference type="Gene3D" id="1.10.1200.10">
    <property type="entry name" value="ACP-like"/>
    <property type="match status" value="1"/>
</dbReference>
<dbReference type="InterPro" id="IPR036736">
    <property type="entry name" value="ACP-like_sf"/>
</dbReference>
<dbReference type="InterPro" id="IPR009081">
    <property type="entry name" value="PP-bd_ACP"/>
</dbReference>
<dbReference type="Pfam" id="PF00550">
    <property type="entry name" value="PP-binding"/>
    <property type="match status" value="1"/>
</dbReference>
<dbReference type="SUPFAM" id="SSF47336">
    <property type="entry name" value="ACP-like"/>
    <property type="match status" value="1"/>
</dbReference>
<dbReference type="PROSITE" id="PS50075">
    <property type="entry name" value="CARRIER"/>
    <property type="match status" value="1"/>
</dbReference>
<evidence type="ECO:0000255" key="1">
    <source>
        <dbReference type="PROSITE-ProRule" id="PRU00258"/>
    </source>
</evidence>
<evidence type="ECO:0000269" key="2">
    <source>
    </source>
</evidence>
<evidence type="ECO:0000269" key="3">
    <source>
    </source>
</evidence>
<evidence type="ECO:0000269" key="4">
    <source>
    </source>
</evidence>
<evidence type="ECO:0000269" key="5">
    <source>
    </source>
</evidence>
<evidence type="ECO:0000305" key="6"/>
<organism>
    <name type="scientific">Mycobacterium tuberculosis (strain ATCC 25618 / H37Rv)</name>
    <dbReference type="NCBI Taxonomy" id="83332"/>
    <lineage>
        <taxon>Bacteria</taxon>
        <taxon>Bacillati</taxon>
        <taxon>Actinomycetota</taxon>
        <taxon>Actinomycetes</taxon>
        <taxon>Mycobacteriales</taxon>
        <taxon>Mycobacteriaceae</taxon>
        <taxon>Mycobacterium</taxon>
        <taxon>Mycobacterium tuberculosis complex</taxon>
    </lineage>
</organism>
<comment type="function">
    <text evidence="3 4 5">Acyl-carrier protein (ACP) involved in the biosynthesis of a unique class of isonitrile lipopeptides (INLPs) that seem to function as virulence factors in M.tuberculosis and to play a role in metal acquisition (PubMed:28634299). Is the dedicated ACP for the loading of activated acyl groups catalyzed by FadD10 (PubMed:22451903, PubMed:23625916, PubMed:28634299).</text>
</comment>
<comment type="cofactor">
    <cofactor evidence="1">
        <name>pantetheine 4'-phosphate</name>
        <dbReference type="ChEBI" id="CHEBI:47942"/>
    </cofactor>
</comment>
<comment type="pathway">
    <text evidence="6">Lipid metabolism; fatty acid metabolism.</text>
</comment>
<comment type="disruption phenotype">
    <text evidence="2">Cells lacking this gene are shown to be highly attenuated in a mouse tuberculosis model.</text>
</comment>
<comment type="similarity">
    <text evidence="6">Belongs to the acyl carrier protein (ACP) family.</text>
</comment>
<protein>
    <recommendedName>
        <fullName evidence="6">Acyl carrier protein Rv0100</fullName>
    </recommendedName>
</protein>
<proteinExistence type="evidence at protein level"/>
<feature type="chain" id="PRO_0000103671" description="Acyl carrier protein Rv0100">
    <location>
        <begin position="1"/>
        <end position="78"/>
    </location>
</feature>
<feature type="domain" description="Carrier" evidence="1">
    <location>
        <begin position="1"/>
        <end position="78"/>
    </location>
</feature>
<feature type="modified residue" description="O-(pantetheine 4'-phosphoryl)serine" evidence="1">
    <location>
        <position position="35"/>
    </location>
</feature>
<accession>P9WM65</accession>
<accession>L0T2L2</accession>
<accession>P64687</accession>
<accession>Q10895</accession>
<sequence>MRDRILAAVCDVLYIDEADLIDGDETDLRDLGLDSVRFVLLMKQLGVNRQSELPSRLAANPSIAGWLRELEAVCTEFG</sequence>
<reference key="1">
    <citation type="journal article" date="1998" name="Nature">
        <title>Deciphering the biology of Mycobacterium tuberculosis from the complete genome sequence.</title>
        <authorList>
            <person name="Cole S.T."/>
            <person name="Brosch R."/>
            <person name="Parkhill J."/>
            <person name="Garnier T."/>
            <person name="Churcher C.M."/>
            <person name="Harris D.E."/>
            <person name="Gordon S.V."/>
            <person name="Eiglmeier K."/>
            <person name="Gas S."/>
            <person name="Barry C.E. III"/>
            <person name="Tekaia F."/>
            <person name="Badcock K."/>
            <person name="Basham D."/>
            <person name="Brown D."/>
            <person name="Chillingworth T."/>
            <person name="Connor R."/>
            <person name="Davies R.M."/>
            <person name="Devlin K."/>
            <person name="Feltwell T."/>
            <person name="Gentles S."/>
            <person name="Hamlin N."/>
            <person name="Holroyd S."/>
            <person name="Hornsby T."/>
            <person name="Jagels K."/>
            <person name="Krogh A."/>
            <person name="McLean J."/>
            <person name="Moule S."/>
            <person name="Murphy L.D."/>
            <person name="Oliver S."/>
            <person name="Osborne J."/>
            <person name="Quail M.A."/>
            <person name="Rajandream M.A."/>
            <person name="Rogers J."/>
            <person name="Rutter S."/>
            <person name="Seeger K."/>
            <person name="Skelton S."/>
            <person name="Squares S."/>
            <person name="Squares R."/>
            <person name="Sulston J.E."/>
            <person name="Taylor K."/>
            <person name="Whitehead S."/>
            <person name="Barrell B.G."/>
        </authorList>
    </citation>
    <scope>NUCLEOTIDE SEQUENCE [LARGE SCALE GENOMIC DNA]</scope>
    <source>
        <strain>ATCC 25618 / H37Rv</strain>
    </source>
</reference>
<reference key="2">
    <citation type="journal article" date="2003" name="Proc. Natl. Acad. Sci. U.S.A.">
        <title>Genetic requirements for mycobacterial survival during infection.</title>
        <authorList>
            <person name="Sassetti C.M."/>
            <person name="Rubin E.J."/>
        </authorList>
    </citation>
    <scope>DISRUPTION PHENOTYPE</scope>
    <source>
        <strain>ATCC 25618 / H37Rv</strain>
    </source>
</reference>
<reference key="3">
    <citation type="journal article" date="2011" name="Mol. Cell. Proteomics">
        <title>Proteogenomic analysis of Mycobacterium tuberculosis by high resolution mass spectrometry.</title>
        <authorList>
            <person name="Kelkar D.S."/>
            <person name="Kumar D."/>
            <person name="Kumar P."/>
            <person name="Balakrishnan L."/>
            <person name="Muthusamy B."/>
            <person name="Yadav A.K."/>
            <person name="Shrivastava P."/>
            <person name="Marimuthu A."/>
            <person name="Anand S."/>
            <person name="Sundaram H."/>
            <person name="Kingsbury R."/>
            <person name="Harsha H.C."/>
            <person name="Nair B."/>
            <person name="Prasad T.S."/>
            <person name="Chauhan D.S."/>
            <person name="Katoch K."/>
            <person name="Katoch V.M."/>
            <person name="Kumar P."/>
            <person name="Chaerkady R."/>
            <person name="Ramachandran S."/>
            <person name="Dash D."/>
            <person name="Pandey A."/>
        </authorList>
    </citation>
    <scope>IDENTIFICATION BY MASS SPECTROMETRY [LARGE SCALE ANALYSIS]</scope>
    <source>
        <strain>ATCC 25618 / H37Rv</strain>
    </source>
</reference>
<reference key="4">
    <citation type="journal article" date="2012" name="Proc. Natl. Acad. Sci. U.S.A.">
        <title>Nonprocessive [2 + 2]e- off-loading reductase domains from mycobacterial nonribosomal peptide synthetases.</title>
        <authorList>
            <person name="Chhabra A."/>
            <person name="Haque A.S."/>
            <person name="Pal R.K."/>
            <person name="Goyal A."/>
            <person name="Rai R."/>
            <person name="Joshi S."/>
            <person name="Panjikar S."/>
            <person name="Pasha S."/>
            <person name="Sankaranarayanan R."/>
            <person name="Gokhale R.S."/>
        </authorList>
    </citation>
    <scope>FUNCTION</scope>
</reference>
<reference key="5">
    <citation type="journal article" date="2013" name="J. Biol. Chem.">
        <title>Structures of Mycobacterium tuberculosis FadD10 protein reveal a new type of adenylate-forming enzyme.</title>
        <authorList>
            <person name="Liu Z."/>
            <person name="Ioerger T.R."/>
            <person name="Wang F."/>
            <person name="Sacchettini J.C."/>
        </authorList>
    </citation>
    <scope>FUNCTION</scope>
</reference>
<reference key="6">
    <citation type="journal article" date="2017" name="Proc. Natl. Acad. Sci. U.S.A.">
        <title>Biosynthesis of isonitrile lipopeptides by conserved nonribosomal peptide synthetase gene clusters in Actinobacteria.</title>
        <authorList>
            <person name="Harris N.C."/>
            <person name="Sato M."/>
            <person name="Herman N.A."/>
            <person name="Twigg F."/>
            <person name="Cai W."/>
            <person name="Liu J."/>
            <person name="Zhu X."/>
            <person name="Downey J."/>
            <person name="Khalaf R."/>
            <person name="Martin J."/>
            <person name="Koshino H."/>
            <person name="Zhang W."/>
        </authorList>
    </citation>
    <scope>FUNCTION</scope>
    <source>
        <strain>ATCC 25618 / H37Rv</strain>
    </source>
</reference>
<reference key="7">
    <citation type="journal article" date="2019" name="Acta Crystallogr. F Struct. Biol. Commun.">
        <title>Rv0100, a proposed acyl carrier protein in Mycobacterium tuberculosis: expression, purification and crystallization.</title>
        <authorList>
            <person name="Bondoc J.M.G."/>
            <person name="Gutka H.J."/>
            <person name="Almutairi M.M."/>
            <person name="Patwell R."/>
            <person name="Rutter M.W."/>
            <person name="Wolf N.M."/>
            <person name="Samudrala R."/>
            <person name="Mehboob S."/>
            <person name="Movahedzadeh F."/>
        </authorList>
    </citation>
    <scope>CRYSTALLIZATION</scope>
</reference>
<reference key="8">
    <citation type="journal article" date="2020" name="Acta Crystallogr. F Struct. Biol. Commun.">
        <title>Rv0100, a proposed acyl carrier protein in Mycobacterium tuberculosis: expression, purification and crystallization. Corrigendum.</title>
        <authorList>
            <person name="Bondoc J.M.G."/>
            <person name="Gutka H.J."/>
            <person name="Almutairi M.M."/>
            <person name="Patwell R."/>
            <person name="Rutter M.W."/>
            <person name="Wolf N.M."/>
            <person name="Samudrala R."/>
            <person name="Mehboob S."/>
            <person name="Dementiev A."/>
            <person name="Abad-Zapatero C."/>
            <person name="Movahedzadeh F."/>
        </authorList>
    </citation>
    <scope>ERRATUM OF PUBMED:31584013</scope>
</reference>